<proteinExistence type="inferred from homology"/>
<comment type="function">
    <text evidence="1">Catalyzes amidations at positions B, D, E, and G on adenosylcobyrinic A,C-diamide. NH(2) groups are provided by glutamine, and one molecule of ATP is hydrogenolyzed for each amidation.</text>
</comment>
<comment type="pathway">
    <text evidence="1">Cofactor biosynthesis; adenosylcobalamin biosynthesis.</text>
</comment>
<comment type="similarity">
    <text evidence="1">Belongs to the CobB/CobQ family. CobQ subfamily.</text>
</comment>
<gene>
    <name evidence="1" type="primary">cobQ</name>
    <name type="ordered locus">CPR_1119</name>
</gene>
<feature type="chain" id="PRO_1000002354" description="Cobyric acid synthase">
    <location>
        <begin position="1"/>
        <end position="487"/>
    </location>
</feature>
<feature type="domain" description="GATase cobBQ-type" evidence="1">
    <location>
        <begin position="249"/>
        <end position="435"/>
    </location>
</feature>
<feature type="active site" description="Nucleophile" evidence="1">
    <location>
        <position position="330"/>
    </location>
</feature>
<feature type="active site" evidence="1">
    <location>
        <position position="427"/>
    </location>
</feature>
<reference key="1">
    <citation type="journal article" date="2006" name="Genome Res.">
        <title>Skewed genomic variability in strains of the toxigenic bacterial pathogen, Clostridium perfringens.</title>
        <authorList>
            <person name="Myers G.S.A."/>
            <person name="Rasko D.A."/>
            <person name="Cheung J.K."/>
            <person name="Ravel J."/>
            <person name="Seshadri R."/>
            <person name="DeBoy R.T."/>
            <person name="Ren Q."/>
            <person name="Varga J."/>
            <person name="Awad M.M."/>
            <person name="Brinkac L.M."/>
            <person name="Daugherty S.C."/>
            <person name="Haft D.H."/>
            <person name="Dodson R.J."/>
            <person name="Madupu R."/>
            <person name="Nelson W.C."/>
            <person name="Rosovitz M.J."/>
            <person name="Sullivan S.A."/>
            <person name="Khouri H."/>
            <person name="Dimitrov G.I."/>
            <person name="Watkins K.L."/>
            <person name="Mulligan S."/>
            <person name="Benton J."/>
            <person name="Radune D."/>
            <person name="Fisher D.J."/>
            <person name="Atkins H.S."/>
            <person name="Hiscox T."/>
            <person name="Jost B.H."/>
            <person name="Billington S.J."/>
            <person name="Songer J.G."/>
            <person name="McClane B.A."/>
            <person name="Titball R.W."/>
            <person name="Rood J.I."/>
            <person name="Melville S.B."/>
            <person name="Paulsen I.T."/>
        </authorList>
    </citation>
    <scope>NUCLEOTIDE SEQUENCE [LARGE SCALE GENOMIC DNA]</scope>
    <source>
        <strain>SM101 / Type A</strain>
    </source>
</reference>
<evidence type="ECO:0000255" key="1">
    <source>
        <dbReference type="HAMAP-Rule" id="MF_00028"/>
    </source>
</evidence>
<sequence length="487" mass="54788">MKYKSIMLLGTASSVGKSTVAAAFCRYFKKKGYRVAPYKALNISLNSFVTKDGDEIGRAQVVQAEACEIDPKEYMNPILMKPSAGFKTQVIVRGKVHCTMDAYKYKELNKYLKEKAKEAYDDISNDYDLIVLEGSGSCAEINLRETDIANMHTAKMADADVILVSDINRGGVFASIVGTIMLLTEEERKRVKGVIINKFRGKREFFEPAMRQIEEIIKIPVLGVMPYFDLDIEEEDSASIKLRKGNGKGIDIAIVRLPHMSNFTDFNSLGRIKDVCIRYAENPKDLENANMIIIPGSKNTIDDLIYLKESGFKEALINESSKGKLIFGICGGYQILGEKIIDSLGVEGDIREEEGLGLLNIVTSFNKEKTTKQVVAFDLEGNEVSGYEIHNGESVPTAKENIWIKEQNGNVLGMKNKEQNVFGTYIHGIFDEGDFGEKLINKLKKELNIEESNDVNYKDYKMSQYDKLCELLEENIDMAYVENLIRY</sequence>
<dbReference type="EMBL" id="CP000312">
    <property type="protein sequence ID" value="ABG85782.1"/>
    <property type="molecule type" value="Genomic_DNA"/>
</dbReference>
<dbReference type="RefSeq" id="WP_011592135.1">
    <property type="nucleotide sequence ID" value="NC_008262.1"/>
</dbReference>
<dbReference type="KEGG" id="cpr:CPR_1119"/>
<dbReference type="UniPathway" id="UPA00148"/>
<dbReference type="Proteomes" id="UP000001824">
    <property type="component" value="Chromosome"/>
</dbReference>
<dbReference type="GO" id="GO:0015420">
    <property type="term" value="F:ABC-type vitamin B12 transporter activity"/>
    <property type="evidence" value="ECO:0007669"/>
    <property type="project" value="UniProtKB-UniRule"/>
</dbReference>
<dbReference type="GO" id="GO:0003824">
    <property type="term" value="F:catalytic activity"/>
    <property type="evidence" value="ECO:0007669"/>
    <property type="project" value="InterPro"/>
</dbReference>
<dbReference type="GO" id="GO:0009236">
    <property type="term" value="P:cobalamin biosynthetic process"/>
    <property type="evidence" value="ECO:0007669"/>
    <property type="project" value="UniProtKB-UniRule"/>
</dbReference>
<dbReference type="CDD" id="cd05389">
    <property type="entry name" value="CobQ_N"/>
    <property type="match status" value="1"/>
</dbReference>
<dbReference type="CDD" id="cd01750">
    <property type="entry name" value="GATase1_CobQ"/>
    <property type="match status" value="1"/>
</dbReference>
<dbReference type="Gene3D" id="3.40.50.880">
    <property type="match status" value="1"/>
</dbReference>
<dbReference type="Gene3D" id="3.40.50.300">
    <property type="entry name" value="P-loop containing nucleotide triphosphate hydrolases"/>
    <property type="match status" value="1"/>
</dbReference>
<dbReference type="HAMAP" id="MF_00028">
    <property type="entry name" value="CobQ"/>
    <property type="match status" value="1"/>
</dbReference>
<dbReference type="InterPro" id="IPR029062">
    <property type="entry name" value="Class_I_gatase-like"/>
</dbReference>
<dbReference type="InterPro" id="IPR002586">
    <property type="entry name" value="CobQ/CobB/MinD/ParA_Nub-bd_dom"/>
</dbReference>
<dbReference type="InterPro" id="IPR033949">
    <property type="entry name" value="CobQ_GATase1"/>
</dbReference>
<dbReference type="InterPro" id="IPR047045">
    <property type="entry name" value="CobQ_N"/>
</dbReference>
<dbReference type="InterPro" id="IPR004459">
    <property type="entry name" value="CobQ_synth"/>
</dbReference>
<dbReference type="InterPro" id="IPR011698">
    <property type="entry name" value="GATase_3"/>
</dbReference>
<dbReference type="InterPro" id="IPR027417">
    <property type="entry name" value="P-loop_NTPase"/>
</dbReference>
<dbReference type="NCBIfam" id="TIGR00313">
    <property type="entry name" value="cobQ"/>
    <property type="match status" value="1"/>
</dbReference>
<dbReference type="NCBIfam" id="NF001989">
    <property type="entry name" value="PRK00784.1"/>
    <property type="match status" value="1"/>
</dbReference>
<dbReference type="PANTHER" id="PTHR21343:SF1">
    <property type="entry name" value="COBYRIC ACID SYNTHASE"/>
    <property type="match status" value="1"/>
</dbReference>
<dbReference type="PANTHER" id="PTHR21343">
    <property type="entry name" value="DETHIOBIOTIN SYNTHETASE"/>
    <property type="match status" value="1"/>
</dbReference>
<dbReference type="Pfam" id="PF01656">
    <property type="entry name" value="CbiA"/>
    <property type="match status" value="1"/>
</dbReference>
<dbReference type="Pfam" id="PF07685">
    <property type="entry name" value="GATase_3"/>
    <property type="match status" value="1"/>
</dbReference>
<dbReference type="SUPFAM" id="SSF52317">
    <property type="entry name" value="Class I glutamine amidotransferase-like"/>
    <property type="match status" value="1"/>
</dbReference>
<dbReference type="SUPFAM" id="SSF52540">
    <property type="entry name" value="P-loop containing nucleoside triphosphate hydrolases"/>
    <property type="match status" value="1"/>
</dbReference>
<dbReference type="PROSITE" id="PS51274">
    <property type="entry name" value="GATASE_COBBQ"/>
    <property type="match status" value="1"/>
</dbReference>
<organism>
    <name type="scientific">Clostridium perfringens (strain SM101 / Type A)</name>
    <dbReference type="NCBI Taxonomy" id="289380"/>
    <lineage>
        <taxon>Bacteria</taxon>
        <taxon>Bacillati</taxon>
        <taxon>Bacillota</taxon>
        <taxon>Clostridia</taxon>
        <taxon>Eubacteriales</taxon>
        <taxon>Clostridiaceae</taxon>
        <taxon>Clostridium</taxon>
    </lineage>
</organism>
<protein>
    <recommendedName>
        <fullName evidence="1">Cobyric acid synthase</fullName>
    </recommendedName>
</protein>
<keyword id="KW-0169">Cobalamin biosynthesis</keyword>
<keyword id="KW-0315">Glutamine amidotransferase</keyword>
<accession>Q0STW6</accession>
<name>COBQ_CLOPS</name>